<sequence length="227" mass="25133">MTIKQLHESDRPREKMIRLGARCLTDAELLAILIGSGNDRQTAIQLAQEILAKMDNSLPRLAKCDIQELTGSFRGMGPAKAVTVMAAMELSRRIPSQEMPRRESITDSRMAYRTISPFLTDLPQEEMWVLLLNQSGKIISMENLSRGGVSETSADVRLIMHKAVSHLASAIILAHNHPSGTVRPSEQDIQLTQRVQKAATLLGFRLNDHLIIGDDGAYFSFADEGLL</sequence>
<proteinExistence type="inferred from homology"/>
<accession>Q7MVX9</accession>
<comment type="similarity">
    <text evidence="2">Belongs to the UPF0758 family.</text>
</comment>
<protein>
    <recommendedName>
        <fullName>UPF0758 protein PG_0894</fullName>
    </recommendedName>
</protein>
<name>Y894_PORGI</name>
<gene>
    <name type="ordered locus">PG_0894</name>
</gene>
<reference key="1">
    <citation type="journal article" date="2003" name="J. Bacteriol.">
        <title>Complete genome sequence of the oral pathogenic bacterium Porphyromonas gingivalis strain W83.</title>
        <authorList>
            <person name="Nelson K.E."/>
            <person name="Fleischmann R.D."/>
            <person name="DeBoy R.T."/>
            <person name="Paulsen I.T."/>
            <person name="Fouts D.E."/>
            <person name="Eisen J.A."/>
            <person name="Daugherty S.C."/>
            <person name="Dodson R.J."/>
            <person name="Durkin A.S."/>
            <person name="Gwinn M.L."/>
            <person name="Haft D.H."/>
            <person name="Kolonay J.F."/>
            <person name="Nelson W.C."/>
            <person name="Mason T.M."/>
            <person name="Tallon L."/>
            <person name="Gray J."/>
            <person name="Granger D."/>
            <person name="Tettelin H."/>
            <person name="Dong H."/>
            <person name="Galvin J.L."/>
            <person name="Duncan M.J."/>
            <person name="Dewhirst F.E."/>
            <person name="Fraser C.M."/>
        </authorList>
    </citation>
    <scope>NUCLEOTIDE SEQUENCE [LARGE SCALE GENOMIC DNA]</scope>
    <source>
        <strain>ATCC BAA-308 / W83</strain>
    </source>
</reference>
<evidence type="ECO:0000255" key="1">
    <source>
        <dbReference type="PROSITE-ProRule" id="PRU01182"/>
    </source>
</evidence>
<evidence type="ECO:0000305" key="2"/>
<keyword id="KW-0378">Hydrolase</keyword>
<keyword id="KW-0479">Metal-binding</keyword>
<keyword id="KW-0482">Metalloprotease</keyword>
<keyword id="KW-0645">Protease</keyword>
<keyword id="KW-1185">Reference proteome</keyword>
<keyword id="KW-0862">Zinc</keyword>
<organism>
    <name type="scientific">Porphyromonas gingivalis (strain ATCC BAA-308 / W83)</name>
    <dbReference type="NCBI Taxonomy" id="242619"/>
    <lineage>
        <taxon>Bacteria</taxon>
        <taxon>Pseudomonadati</taxon>
        <taxon>Bacteroidota</taxon>
        <taxon>Bacteroidia</taxon>
        <taxon>Bacteroidales</taxon>
        <taxon>Porphyromonadaceae</taxon>
        <taxon>Porphyromonas</taxon>
    </lineage>
</organism>
<dbReference type="EMBL" id="AE015924">
    <property type="protein sequence ID" value="AAQ66037.1"/>
    <property type="molecule type" value="Genomic_DNA"/>
</dbReference>
<dbReference type="SMR" id="Q7MVX9"/>
<dbReference type="STRING" id="242619.PG_0894"/>
<dbReference type="EnsemblBacteria" id="AAQ66037">
    <property type="protein sequence ID" value="AAQ66037"/>
    <property type="gene ID" value="PG_0894"/>
</dbReference>
<dbReference type="KEGG" id="pgi:PG_0894"/>
<dbReference type="eggNOG" id="COG2003">
    <property type="taxonomic scope" value="Bacteria"/>
</dbReference>
<dbReference type="HOGENOM" id="CLU_073529_0_2_10"/>
<dbReference type="Proteomes" id="UP000000588">
    <property type="component" value="Chromosome"/>
</dbReference>
<dbReference type="GO" id="GO:0046872">
    <property type="term" value="F:metal ion binding"/>
    <property type="evidence" value="ECO:0007669"/>
    <property type="project" value="UniProtKB-KW"/>
</dbReference>
<dbReference type="GO" id="GO:0008237">
    <property type="term" value="F:metallopeptidase activity"/>
    <property type="evidence" value="ECO:0007669"/>
    <property type="project" value="UniProtKB-KW"/>
</dbReference>
<dbReference type="GO" id="GO:0006508">
    <property type="term" value="P:proteolysis"/>
    <property type="evidence" value="ECO:0007669"/>
    <property type="project" value="UniProtKB-KW"/>
</dbReference>
<dbReference type="CDD" id="cd08071">
    <property type="entry name" value="MPN_DUF2466"/>
    <property type="match status" value="1"/>
</dbReference>
<dbReference type="Gene3D" id="3.40.140.10">
    <property type="entry name" value="Cytidine Deaminase, domain 2"/>
    <property type="match status" value="1"/>
</dbReference>
<dbReference type="InterPro" id="IPR037518">
    <property type="entry name" value="MPN"/>
</dbReference>
<dbReference type="InterPro" id="IPR025657">
    <property type="entry name" value="RadC_JAB"/>
</dbReference>
<dbReference type="InterPro" id="IPR001405">
    <property type="entry name" value="UPF0758"/>
</dbReference>
<dbReference type="InterPro" id="IPR020891">
    <property type="entry name" value="UPF0758_CS"/>
</dbReference>
<dbReference type="InterPro" id="IPR046778">
    <property type="entry name" value="UPF0758_N"/>
</dbReference>
<dbReference type="NCBIfam" id="NF000642">
    <property type="entry name" value="PRK00024.1"/>
    <property type="match status" value="1"/>
</dbReference>
<dbReference type="NCBIfam" id="TIGR00608">
    <property type="entry name" value="radc"/>
    <property type="match status" value="1"/>
</dbReference>
<dbReference type="PANTHER" id="PTHR30471">
    <property type="entry name" value="DNA REPAIR PROTEIN RADC"/>
    <property type="match status" value="1"/>
</dbReference>
<dbReference type="PANTHER" id="PTHR30471:SF3">
    <property type="entry name" value="UPF0758 PROTEIN YEES-RELATED"/>
    <property type="match status" value="1"/>
</dbReference>
<dbReference type="Pfam" id="PF04002">
    <property type="entry name" value="RadC"/>
    <property type="match status" value="1"/>
</dbReference>
<dbReference type="Pfam" id="PF20582">
    <property type="entry name" value="UPF0758_N"/>
    <property type="match status" value="1"/>
</dbReference>
<dbReference type="SUPFAM" id="SSF102712">
    <property type="entry name" value="JAB1/MPN domain"/>
    <property type="match status" value="1"/>
</dbReference>
<dbReference type="PROSITE" id="PS50249">
    <property type="entry name" value="MPN"/>
    <property type="match status" value="1"/>
</dbReference>
<dbReference type="PROSITE" id="PS01302">
    <property type="entry name" value="UPF0758"/>
    <property type="match status" value="1"/>
</dbReference>
<feature type="chain" id="PRO_1000116360" description="UPF0758 protein PG_0894">
    <location>
        <begin position="1"/>
        <end position="227"/>
    </location>
</feature>
<feature type="domain" description="MPN" evidence="1">
    <location>
        <begin position="104"/>
        <end position="227"/>
    </location>
</feature>
<feature type="short sequence motif" description="JAMM motif" evidence="1">
    <location>
        <begin position="175"/>
        <end position="188"/>
    </location>
</feature>
<feature type="binding site" evidence="1">
    <location>
        <position position="175"/>
    </location>
    <ligand>
        <name>Zn(2+)</name>
        <dbReference type="ChEBI" id="CHEBI:29105"/>
        <note>catalytic</note>
    </ligand>
</feature>
<feature type="binding site" evidence="1">
    <location>
        <position position="177"/>
    </location>
    <ligand>
        <name>Zn(2+)</name>
        <dbReference type="ChEBI" id="CHEBI:29105"/>
        <note>catalytic</note>
    </ligand>
</feature>
<feature type="binding site" evidence="1">
    <location>
        <position position="188"/>
    </location>
    <ligand>
        <name>Zn(2+)</name>
        <dbReference type="ChEBI" id="CHEBI:29105"/>
        <note>catalytic</note>
    </ligand>
</feature>